<evidence type="ECO:0000255" key="1"/>
<evidence type="ECO:0000256" key="2">
    <source>
        <dbReference type="SAM" id="MobiDB-lite"/>
    </source>
</evidence>
<evidence type="ECO:0000269" key="3">
    <source>
    </source>
</evidence>
<evidence type="ECO:0000269" key="4">
    <source>
    </source>
</evidence>
<evidence type="ECO:0000269" key="5">
    <source>
    </source>
</evidence>
<evidence type="ECO:0000269" key="6">
    <source>
    </source>
</evidence>
<evidence type="ECO:0000303" key="7">
    <source>
    </source>
</evidence>
<evidence type="ECO:0000303" key="8">
    <source>
    </source>
</evidence>
<evidence type="ECO:0000305" key="9"/>
<evidence type="ECO:0000312" key="10">
    <source>
        <dbReference type="EMBL" id="AAF00982.3"/>
    </source>
</evidence>
<accession>F1NSM7</accession>
<accession>Q9PUT1</accession>
<feature type="signal peptide" evidence="3 4">
    <location>
        <begin position="1"/>
        <end position="18"/>
    </location>
</feature>
<feature type="chain" id="PRO_0000411994" description="Ovocleidin-116" evidence="3 4">
    <location>
        <begin position="19"/>
        <end position="743"/>
    </location>
</feature>
<feature type="region of interest" description="Disordered" evidence="2">
    <location>
        <begin position="68"/>
        <end position="225"/>
    </location>
</feature>
<feature type="region of interest" description="Disordered" evidence="2">
    <location>
        <begin position="333"/>
        <end position="356"/>
    </location>
</feature>
<feature type="region of interest" description="Disordered" evidence="2">
    <location>
        <begin position="385"/>
        <end position="454"/>
    </location>
</feature>
<feature type="region of interest" description="Disordered" evidence="2">
    <location>
        <begin position="505"/>
        <end position="534"/>
    </location>
</feature>
<feature type="region of interest" description="Disordered" evidence="2">
    <location>
        <begin position="549"/>
        <end position="577"/>
    </location>
</feature>
<feature type="region of interest" description="Disordered" evidence="2">
    <location>
        <begin position="628"/>
        <end position="649"/>
    </location>
</feature>
<feature type="region of interest" description="Disordered" evidence="2">
    <location>
        <begin position="692"/>
        <end position="743"/>
    </location>
</feature>
<feature type="compositionally biased region" description="Polar residues" evidence="2">
    <location>
        <begin position="129"/>
        <end position="141"/>
    </location>
</feature>
<feature type="compositionally biased region" description="Gly residues" evidence="2">
    <location>
        <begin position="169"/>
        <end position="179"/>
    </location>
</feature>
<feature type="compositionally biased region" description="Low complexity" evidence="2">
    <location>
        <begin position="402"/>
        <end position="420"/>
    </location>
</feature>
<feature type="compositionally biased region" description="Polar residues" evidence="2">
    <location>
        <begin position="421"/>
        <end position="431"/>
    </location>
</feature>
<feature type="compositionally biased region" description="Basic and acidic residues" evidence="2">
    <location>
        <begin position="549"/>
        <end position="558"/>
    </location>
</feature>
<feature type="glycosylation site" description="N-linked (GlcNAc...) asparagine" evidence="4">
    <location>
        <position position="62"/>
    </location>
</feature>
<feature type="glycosylation site" description="N-linked (GlcNAc...) asparagine; partial" evidence="4">
    <location>
        <position position="293"/>
    </location>
</feature>
<feature type="disulfide bond" evidence="4">
    <location>
        <begin position="31"/>
        <end position="42"/>
    </location>
</feature>
<feature type="sequence conflict" description="In Ref. 1; AAF00982." evidence="9" ref="1">
    <original>A</original>
    <variation>V</variation>
    <location>
        <position position="94"/>
    </location>
</feature>
<feature type="sequence conflict" description="In Ref. 1; AAF00982." evidence="9" ref="1">
    <original>T</original>
    <variation>P</variation>
    <location>
        <position position="108"/>
    </location>
</feature>
<feature type="sequence conflict" description="In Ref. 1; AAF00982." evidence="9" ref="1">
    <original>Q</original>
    <variation>H</variation>
    <location>
        <position position="163"/>
    </location>
</feature>
<feature type="sequence conflict" description="In Ref. 1; AAF00982." evidence="9" ref="1">
    <original>E</original>
    <variation>K</variation>
    <location>
        <position position="197"/>
    </location>
</feature>
<feature type="sequence conflict" description="In Ref. 1; AAF00982." evidence="9" ref="1">
    <original>P</original>
    <variation>T</variation>
    <location>
        <position position="208"/>
    </location>
</feature>
<feature type="sequence conflict" description="In Ref. 1; AAF00982." evidence="9" ref="1">
    <original>S</original>
    <variation>T</variation>
    <location>
        <position position="438"/>
    </location>
</feature>
<feature type="sequence conflict" description="In Ref. 1; AAF00982." evidence="9" ref="1">
    <original>A</original>
    <variation>S</variation>
    <location>
        <position position="457"/>
    </location>
</feature>
<feature type="sequence conflict" description="In Ref. 1; AAF00982." evidence="9" ref="1">
    <original>A</original>
    <variation>S</variation>
    <location>
        <position position="490"/>
    </location>
</feature>
<feature type="sequence conflict" description="In Ref. 1; AAF00982." evidence="9" ref="1">
    <original>H</original>
    <variation>R</variation>
    <location>
        <position position="727"/>
    </location>
</feature>
<protein>
    <recommendedName>
        <fullName evidence="10">Ovocleidin-116</fullName>
        <shortName evidence="8">OC-116</shortName>
    </recommendedName>
</protein>
<name>OC116_CHICK</name>
<keyword id="KW-0903">Direct protein sequencing</keyword>
<keyword id="KW-1015">Disulfide bond</keyword>
<keyword id="KW-0272">Extracellular matrix</keyword>
<keyword id="KW-0325">Glycoprotein</keyword>
<keyword id="KW-1185">Reference proteome</keyword>
<keyword id="KW-0964">Secreted</keyword>
<keyword id="KW-0732">Signal</keyword>
<sequence length="743" mass="76870">MRATLFCLCLCLLGTVLPTPVSLPARARGNCPGQHQILLKGCNTKHGFYIFQYIYSHLMQKNQTQVKKEEGDHQGTIHGHWLGKVDGEAPGQGAGSSHVPEDKDSPKTHSHITPASKGEGRALRPGIGDSNSVYPTSTSVEGSGDMGSILLGEIINGEDGLPQSTHPGGPHGDGDGGNGVLVDGAVTAGRERASGSEGAGSEGGSHAPVPDQGQAGTMGTGDSAITSVTDSAITSVTKKEDVHVDTEGIDEFAYIPDVDAVTITRGQDGETHISPEDEVKIFIGRANIQVGENDSSVGSAGATSEANVIPTVVTVRPQGHPEESATMATLHHGDSVTSRPVGHPSVGNSGDGATEIHSGQELEAPSPWESTGGDATVTMAVGVQSGKGRSGQRALGKHSLPATMTTRGGRGTASSGLTTGDCSTAASTPSRKGSHVVSAGQGESGEVGTAGPERQRARVQQEVAPARGVVGGMVVPEGHRARVQQEVAPARGVVGGMVVPEGHRARTQPEVASAPSTVGKAAPERHRNRAQQEVAPVPSMVVETVAPERHRARVRPESARLGQAARPEVAPAPSTGGRIVAPGGHRARVWPGAAPAPGVVGVARPAPSKAYNGDKRVAIGKSTDVPRDPWVWGSAHPQAQHTRGSTVAGGFAHLHRGQRLGGLTEMEHSRQVEQVRHADRLRLHERAVYGLSGVGGPLQPPAVHTDPWSADSSQSSEGRWGSHSDSHEEDGEVRGYPYGRQSL</sequence>
<reference evidence="9 10" key="1">
    <citation type="journal article" date="1999" name="J. Biol. Chem.">
        <title>Molecular cloning and ultrastructural localization of the core protein of an eggshell matrix proteoglycan, ovocleidin-116.</title>
        <authorList>
            <person name="Hincke M.T."/>
            <person name="Gautron J."/>
            <person name="Tsang C.P."/>
            <person name="McKee M.D."/>
            <person name="Nys Y."/>
        </authorList>
    </citation>
    <scope>NUCLEOTIDE SEQUENCE [MRNA]</scope>
    <scope>PROTEIN SEQUENCE OF 19-40; 589-611 AND 617-628</scope>
    <scope>FUNCTION</scope>
    <scope>SUBCELLULAR LOCATION</scope>
    <scope>TISSUE SPECIFICITY</scope>
    <scope>DEVELOPMENTAL STAGE</scope>
    <source>
        <strain evidence="3">Isa brown</strain>
        <strain evidence="3">White leghorn</strain>
        <tissue evidence="10">Eggshell matrix</tissue>
        <tissue evidence="3">Uterus</tissue>
    </source>
</reference>
<reference evidence="9 10" key="2">
    <citation type="journal article" date="2002" name="Matrix Biol.">
        <title>Isolation of ovocleidin-116 from chicken eggshells, correction of its amino acid sequence and identification of disulfide bonds and glycosylated Asn.</title>
        <authorList>
            <person name="Mann K."/>
            <person name="Hincke M.T."/>
            <person name="Nys Y."/>
        </authorList>
    </citation>
    <scope>SEQUENCE REVISION</scope>
    <scope>PROTEIN SEQUENCE OF 19-38; 122-133; 234-245; 253-267; 286-300; 390-409; 459-478; 530-549; 589-598; 644-655; 657-668; 660-669 AND 687-706</scope>
    <scope>FUNCTION</scope>
    <scope>GLYCOSYLATION AT ASN-62 AND ASN-293</scope>
    <scope>DISULFIDE BOND</scope>
    <source>
        <tissue evidence="10">Eggshell matrix</tissue>
    </source>
</reference>
<reference key="3">
    <citation type="journal article" date="2004" name="Nature">
        <title>Sequence and comparative analysis of the chicken genome provide unique perspectives on vertebrate evolution.</title>
        <authorList>
            <person name="Hillier L.W."/>
            <person name="Miller W."/>
            <person name="Birney E."/>
            <person name="Warren W."/>
            <person name="Hardison R.C."/>
            <person name="Ponting C.P."/>
            <person name="Bork P."/>
            <person name="Burt D.W."/>
            <person name="Groenen M.A.M."/>
            <person name="Delany M.E."/>
            <person name="Dodgson J.B."/>
            <person name="Chinwalla A.T."/>
            <person name="Cliften P.F."/>
            <person name="Clifton S.W."/>
            <person name="Delehaunty K.D."/>
            <person name="Fronick C."/>
            <person name="Fulton R.S."/>
            <person name="Graves T.A."/>
            <person name="Kremitzki C."/>
            <person name="Layman D."/>
            <person name="Magrini V."/>
            <person name="McPherson J.D."/>
            <person name="Miner T.L."/>
            <person name="Minx P."/>
            <person name="Nash W.E."/>
            <person name="Nhan M.N."/>
            <person name="Nelson J.O."/>
            <person name="Oddy L.G."/>
            <person name="Pohl C.S."/>
            <person name="Randall-Maher J."/>
            <person name="Smith S.M."/>
            <person name="Wallis J.W."/>
            <person name="Yang S.-P."/>
            <person name="Romanov M.N."/>
            <person name="Rondelli C.M."/>
            <person name="Paton B."/>
            <person name="Smith J."/>
            <person name="Morrice D."/>
            <person name="Daniels L."/>
            <person name="Tempest H.G."/>
            <person name="Robertson L."/>
            <person name="Masabanda J.S."/>
            <person name="Griffin D.K."/>
            <person name="Vignal A."/>
            <person name="Fillon V."/>
            <person name="Jacobbson L."/>
            <person name="Kerje S."/>
            <person name="Andersson L."/>
            <person name="Crooijmans R.P."/>
            <person name="Aerts J."/>
            <person name="van der Poel J.J."/>
            <person name="Ellegren H."/>
            <person name="Caldwell R.B."/>
            <person name="Hubbard S.J."/>
            <person name="Grafham D.V."/>
            <person name="Kierzek A.M."/>
            <person name="McLaren S.R."/>
            <person name="Overton I.M."/>
            <person name="Arakawa H."/>
            <person name="Beattie K.J."/>
            <person name="Bezzubov Y."/>
            <person name="Boardman P.E."/>
            <person name="Bonfield J.K."/>
            <person name="Croning M.D.R."/>
            <person name="Davies R.M."/>
            <person name="Francis M.D."/>
            <person name="Humphray S.J."/>
            <person name="Scott C.E."/>
            <person name="Taylor R.G."/>
            <person name="Tickle C."/>
            <person name="Brown W.R.A."/>
            <person name="Rogers J."/>
            <person name="Buerstedde J.-M."/>
            <person name="Wilson S.A."/>
            <person name="Stubbs L."/>
            <person name="Ovcharenko I."/>
            <person name="Gordon L."/>
            <person name="Lucas S."/>
            <person name="Miller M.M."/>
            <person name="Inoko H."/>
            <person name="Shiina T."/>
            <person name="Kaufman J."/>
            <person name="Salomonsen J."/>
            <person name="Skjoedt K."/>
            <person name="Wong G.K.-S."/>
            <person name="Wang J."/>
            <person name="Liu B."/>
            <person name="Wang J."/>
            <person name="Yu J."/>
            <person name="Yang H."/>
            <person name="Nefedov M."/>
            <person name="Koriabine M."/>
            <person name="Dejong P.J."/>
            <person name="Goodstadt L."/>
            <person name="Webber C."/>
            <person name="Dickens N.J."/>
            <person name="Letunic I."/>
            <person name="Suyama M."/>
            <person name="Torrents D."/>
            <person name="von Mering C."/>
            <person name="Zdobnov E.M."/>
            <person name="Makova K."/>
            <person name="Nekrutenko A."/>
            <person name="Elnitski L."/>
            <person name="Eswara P."/>
            <person name="King D.C."/>
            <person name="Yang S.-P."/>
            <person name="Tyekucheva S."/>
            <person name="Radakrishnan A."/>
            <person name="Harris R.S."/>
            <person name="Chiaromonte F."/>
            <person name="Taylor J."/>
            <person name="He J."/>
            <person name="Rijnkels M."/>
            <person name="Griffiths-Jones S."/>
            <person name="Ureta-Vidal A."/>
            <person name="Hoffman M.M."/>
            <person name="Severin J."/>
            <person name="Searle S.M.J."/>
            <person name="Law A.S."/>
            <person name="Speed D."/>
            <person name="Waddington D."/>
            <person name="Cheng Z."/>
            <person name="Tuzun E."/>
            <person name="Eichler E."/>
            <person name="Bao Z."/>
            <person name="Flicek P."/>
            <person name="Shteynberg D.D."/>
            <person name="Brent M.R."/>
            <person name="Bye J.M."/>
            <person name="Huckle E.J."/>
            <person name="Chatterji S."/>
            <person name="Dewey C."/>
            <person name="Pachter L."/>
            <person name="Kouranov A."/>
            <person name="Mourelatos Z."/>
            <person name="Hatzigeorgiou A.G."/>
            <person name="Paterson A.H."/>
            <person name="Ivarie R."/>
            <person name="Brandstrom M."/>
            <person name="Axelsson E."/>
            <person name="Backstrom N."/>
            <person name="Berlin S."/>
            <person name="Webster M.T."/>
            <person name="Pourquie O."/>
            <person name="Reymond A."/>
            <person name="Ucla C."/>
            <person name="Antonarakis S.E."/>
            <person name="Long M."/>
            <person name="Emerson J.J."/>
            <person name="Betran E."/>
            <person name="Dupanloup I."/>
            <person name="Kaessmann H."/>
            <person name="Hinrichs A.S."/>
            <person name="Bejerano G."/>
            <person name="Furey T.S."/>
            <person name="Harte R.A."/>
            <person name="Raney B."/>
            <person name="Siepel A."/>
            <person name="Kent W.J."/>
            <person name="Haussler D."/>
            <person name="Eyras E."/>
            <person name="Castelo R."/>
            <person name="Abril J.F."/>
            <person name="Castellano S."/>
            <person name="Camara F."/>
            <person name="Parra G."/>
            <person name="Guigo R."/>
            <person name="Bourque G."/>
            <person name="Tesler G."/>
            <person name="Pevzner P.A."/>
            <person name="Smit A."/>
            <person name="Fulton L.A."/>
            <person name="Mardis E.R."/>
            <person name="Wilson R.K."/>
        </authorList>
    </citation>
    <scope>NUCLEOTIDE SEQUENCE [LARGE SCALE GENOMIC DNA]</scope>
</reference>
<reference evidence="9" key="4">
    <citation type="journal article" date="2008" name="Poult. Sci.">
        <title>Ovocleidin (OC 116) is present in avian skeletal tissues.</title>
        <authorList>
            <person name="Horvat-Gordon M."/>
            <person name="Yu F."/>
            <person name="Burns D."/>
            <person name="Leach R.M. Jr."/>
        </authorList>
    </citation>
    <scope>TISSUE SPECIFICITY</scope>
</reference>
<reference evidence="9" key="5">
    <citation type="journal article" date="2010" name="J. Exp. Zool. B Mol. Dev. Evol.">
        <title>OC-116, the chicken ortholog of mammalian MEPE found in eggshell, is also expressed in bone cells.</title>
        <authorList>
            <person name="Bardet C."/>
            <person name="Vincent C."/>
            <person name="Lajarille M.C."/>
            <person name="Jaffredo T."/>
            <person name="Sire J.Y."/>
        </authorList>
    </citation>
    <scope>FUNCTION</scope>
    <scope>TISSUE SPECIFICITY</scope>
    <scope>DEVELOPMENTAL STAGE</scope>
</reference>
<proteinExistence type="evidence at protein level"/>
<comment type="function">
    <text evidence="4 7 8">Major component of the eggshell matrix. May play an important role in the regulation of calcite growth during eggshell calcification. May also regulate the mineralization process in developing and growing bones.</text>
</comment>
<comment type="subcellular location">
    <subcellularLocation>
        <location evidence="3">Secreted</location>
        <location evidence="3">Extracellular space</location>
        <location evidence="3">Extracellular matrix</location>
    </subcellularLocation>
    <text evidence="3">Synthesized and secreted by the granular epithelial cells of the uterus and incorporated into the eggshell matrix.</text>
</comment>
<comment type="tissue specificity">
    <text evidence="3 5 6">In the eggshell, expressed mainly in the palisade and mammillary layers. Expression also detected in the hypertrophic zone of the epiphyseal growth plate, and in cortical and medullary bone (at protein level). Highly expressed in uterus. Not detected in the proximal oviduct, liver, magnum, duodenum and kidney.</text>
</comment>
<comment type="developmental stage">
    <text evidence="3 6">Expressed at high levels at the middle of the calcification stage of shell formation. Expression levels are similar at 3-4 hours post-oviposition prior to entry of the egg into the uterus and at 16-17 hours post-oviposition during eggshell calcification. Expressed in tibia from 5 dpc and in mandible from 7 dpc until the end of embryonic development at 19 dpc. Expression detected first in osteoblasts, in later stages both in osteoblasts and osteocytes, and by the end of embryonic development mainly in osteocytes.</text>
</comment>
<comment type="PTM">
    <text evidence="4">Asn-62 is fully glycosylated, whereas only less than 10% of Asn-293 seem to be glycosylated.</text>
</comment>
<comment type="similarity">
    <text evidence="1">Belongs to the osteoregulin family.</text>
</comment>
<organism>
    <name type="scientific">Gallus gallus</name>
    <name type="common">Chicken</name>
    <dbReference type="NCBI Taxonomy" id="9031"/>
    <lineage>
        <taxon>Eukaryota</taxon>
        <taxon>Metazoa</taxon>
        <taxon>Chordata</taxon>
        <taxon>Craniata</taxon>
        <taxon>Vertebrata</taxon>
        <taxon>Euteleostomi</taxon>
        <taxon>Archelosauria</taxon>
        <taxon>Archosauria</taxon>
        <taxon>Dinosauria</taxon>
        <taxon>Saurischia</taxon>
        <taxon>Theropoda</taxon>
        <taxon>Coelurosauria</taxon>
        <taxon>Aves</taxon>
        <taxon>Neognathae</taxon>
        <taxon>Galloanserae</taxon>
        <taxon>Galliformes</taxon>
        <taxon>Phasianidae</taxon>
        <taxon>Phasianinae</taxon>
        <taxon>Gallus</taxon>
    </lineage>
</organism>
<dbReference type="EMBL" id="AF148716">
    <property type="protein sequence ID" value="AAF00982.3"/>
    <property type="molecule type" value="mRNA"/>
</dbReference>
<dbReference type="EMBL" id="AADN02009016">
    <property type="status" value="NOT_ANNOTATED_CDS"/>
    <property type="molecule type" value="Genomic_DNA"/>
</dbReference>
<dbReference type="RefSeq" id="NP_989900.1">
    <property type="nucleotide sequence ID" value="NM_204569.1"/>
</dbReference>
<dbReference type="STRING" id="9031.ENSGALP00000017755"/>
<dbReference type="GlyGen" id="F1NSM7">
    <property type="glycosylation" value="5 sites"/>
</dbReference>
<dbReference type="iPTMnet" id="F1NSM7"/>
<dbReference type="PaxDb" id="9031-ENSGALP00000017755"/>
<dbReference type="GeneID" id="395256"/>
<dbReference type="KEGG" id="gga:395256"/>
<dbReference type="CTD" id="56955"/>
<dbReference type="VEuPathDB" id="HostDB:geneid_395256"/>
<dbReference type="eggNOG" id="ENOG502SW2S">
    <property type="taxonomic scope" value="Eukaryota"/>
</dbReference>
<dbReference type="HOGENOM" id="CLU_022074_0_0_1"/>
<dbReference type="InParanoid" id="F1NSM7"/>
<dbReference type="OrthoDB" id="9041543at2759"/>
<dbReference type="Reactome" id="R-GGA-381426">
    <property type="pathway name" value="Regulation of Insulin-like Growth Factor (IGF) transport and uptake by Insulin-like Growth Factor Binding Proteins (IGFBPs)"/>
</dbReference>
<dbReference type="Reactome" id="R-GGA-8957275">
    <property type="pathway name" value="Post-translational protein phosphorylation"/>
</dbReference>
<dbReference type="PRO" id="PR:F1NSM7"/>
<dbReference type="Proteomes" id="UP000000539">
    <property type="component" value="Chromosome 4"/>
</dbReference>
<dbReference type="GO" id="GO:0031012">
    <property type="term" value="C:extracellular matrix"/>
    <property type="evidence" value="ECO:0000314"/>
    <property type="project" value="AgBase"/>
</dbReference>
<dbReference type="GO" id="GO:0005576">
    <property type="term" value="C:extracellular region"/>
    <property type="evidence" value="ECO:0000314"/>
    <property type="project" value="AgBase"/>
</dbReference>
<dbReference type="GO" id="GO:0005615">
    <property type="term" value="C:extracellular space"/>
    <property type="evidence" value="ECO:0000314"/>
    <property type="project" value="AgBase"/>
</dbReference>
<dbReference type="GO" id="GO:0030141">
    <property type="term" value="C:secretory granule"/>
    <property type="evidence" value="ECO:0000314"/>
    <property type="project" value="AgBase"/>
</dbReference>
<dbReference type="GO" id="GO:1990430">
    <property type="term" value="F:extracellular matrix protein binding"/>
    <property type="evidence" value="ECO:0000353"/>
    <property type="project" value="AgBase"/>
</dbReference>
<dbReference type="GO" id="GO:0031214">
    <property type="term" value="P:biomineral tissue development"/>
    <property type="evidence" value="ECO:0000318"/>
    <property type="project" value="GO_Central"/>
</dbReference>
<dbReference type="GO" id="GO:0031215">
    <property type="term" value="P:shell calcification"/>
    <property type="evidence" value="ECO:0000270"/>
    <property type="project" value="AgBase"/>
</dbReference>
<dbReference type="InterPro" id="IPR009837">
    <property type="entry name" value="MEPE"/>
</dbReference>
<dbReference type="PANTHER" id="PTHR16510">
    <property type="entry name" value="EXTRACELLULAR MATRIX PHOSPHOGLYCOPROTEIN WITH ASARM MOTIF"/>
    <property type="match status" value="1"/>
</dbReference>
<dbReference type="PANTHER" id="PTHR16510:SF4">
    <property type="entry name" value="MATRIX EXTRACELLULAR PHOSPHOGLYCOPROTEIN"/>
    <property type="match status" value="1"/>
</dbReference>